<feature type="chain" id="PRO_0000349829" description="tRNA-specific 2-thiouridylase MnmA">
    <location>
        <begin position="1"/>
        <end position="368"/>
    </location>
</feature>
<feature type="region of interest" description="Interaction with tRNA" evidence="1">
    <location>
        <begin position="159"/>
        <end position="161"/>
    </location>
</feature>
<feature type="region of interest" description="Interaction with tRNA" evidence="1">
    <location>
        <begin position="314"/>
        <end position="315"/>
    </location>
</feature>
<feature type="active site" description="Nucleophile" evidence="1">
    <location>
        <position position="110"/>
    </location>
</feature>
<feature type="active site" description="Cysteine persulfide intermediate" evidence="1">
    <location>
        <position position="209"/>
    </location>
</feature>
<feature type="binding site" evidence="1">
    <location>
        <begin position="23"/>
        <end position="30"/>
    </location>
    <ligand>
        <name>ATP</name>
        <dbReference type="ChEBI" id="CHEBI:30616"/>
    </ligand>
</feature>
<feature type="binding site" evidence="1">
    <location>
        <position position="49"/>
    </location>
    <ligand>
        <name>ATP</name>
        <dbReference type="ChEBI" id="CHEBI:30616"/>
    </ligand>
</feature>
<feature type="binding site" evidence="1">
    <location>
        <position position="135"/>
    </location>
    <ligand>
        <name>ATP</name>
        <dbReference type="ChEBI" id="CHEBI:30616"/>
    </ligand>
</feature>
<feature type="site" description="Interaction with tRNA" evidence="1">
    <location>
        <position position="136"/>
    </location>
</feature>
<feature type="site" description="Interaction with tRNA" evidence="1">
    <location>
        <position position="347"/>
    </location>
</feature>
<feature type="disulfide bond" description="Alternate" evidence="1">
    <location>
        <begin position="110"/>
        <end position="209"/>
    </location>
</feature>
<organism>
    <name type="scientific">Synechococcus sp. (strain JA-2-3B'a(2-13))</name>
    <name type="common">Cyanobacteria bacterium Yellowstone B-Prime</name>
    <dbReference type="NCBI Taxonomy" id="321332"/>
    <lineage>
        <taxon>Bacteria</taxon>
        <taxon>Bacillati</taxon>
        <taxon>Cyanobacteriota</taxon>
        <taxon>Cyanophyceae</taxon>
        <taxon>Synechococcales</taxon>
        <taxon>Synechococcaceae</taxon>
        <taxon>Synechococcus</taxon>
    </lineage>
</organism>
<proteinExistence type="inferred from homology"/>
<accession>Q2JM78</accession>
<reference key="1">
    <citation type="journal article" date="2007" name="ISME J.">
        <title>Population level functional diversity in a microbial community revealed by comparative genomic and metagenomic analyses.</title>
        <authorList>
            <person name="Bhaya D."/>
            <person name="Grossman A.R."/>
            <person name="Steunou A.-S."/>
            <person name="Khuri N."/>
            <person name="Cohan F.M."/>
            <person name="Hamamura N."/>
            <person name="Melendrez M.C."/>
            <person name="Bateson M.M."/>
            <person name="Ward D.M."/>
            <person name="Heidelberg J.F."/>
        </authorList>
    </citation>
    <scope>NUCLEOTIDE SEQUENCE [LARGE SCALE GENOMIC DNA]</scope>
    <source>
        <strain>JA-2-3B'a(2-13)</strain>
    </source>
</reference>
<name>MNMA_SYNJB</name>
<evidence type="ECO:0000255" key="1">
    <source>
        <dbReference type="HAMAP-Rule" id="MF_00144"/>
    </source>
</evidence>
<sequence length="368" mass="40166">MVISPHSSVSPVASPSRPRIVAALSGGVDSSTVAALLQEQGYAVEGVTLWLMRGKGQCCTEGLVDAAAVCEQLGIPHHVVDSRELFQANIVDYLVAGYAEGITPLPCSQCNKLVKFGPLLAYAREKLGISQMATGHYARVRFNAELGRYQLLRAVDRQKDQSYFLYDLSQEHLAHSLFPLGEYTKAQTRQLAARYGLVTADKPESQDLCLIETYGSMRSFLDQYLGQRPGEIVDTQGRVLGSHEGIHHYTVGQRKGLGIASSRPLYVVRIDAAMNRVVVGEREEATQAEAWVSQVNWVSIPAPTGSLAVEVQVRYRTPPVPAMVIPESPERVKLQFAEPQFGVTPGQAAVWYHGDLLLGGGILERPSP</sequence>
<dbReference type="EC" id="2.8.1.13" evidence="1"/>
<dbReference type="EMBL" id="CP000240">
    <property type="protein sequence ID" value="ABD02166.1"/>
    <property type="molecule type" value="Genomic_DNA"/>
</dbReference>
<dbReference type="RefSeq" id="WP_011432819.1">
    <property type="nucleotide sequence ID" value="NC_007776.1"/>
</dbReference>
<dbReference type="SMR" id="Q2JM78"/>
<dbReference type="STRING" id="321332.CYB_1191"/>
<dbReference type="KEGG" id="cyb:CYB_1191"/>
<dbReference type="eggNOG" id="COG0482">
    <property type="taxonomic scope" value="Bacteria"/>
</dbReference>
<dbReference type="HOGENOM" id="CLU_035188_0_0_3"/>
<dbReference type="OrthoDB" id="9800696at2"/>
<dbReference type="Proteomes" id="UP000001938">
    <property type="component" value="Chromosome"/>
</dbReference>
<dbReference type="GO" id="GO:0005737">
    <property type="term" value="C:cytoplasm"/>
    <property type="evidence" value="ECO:0007669"/>
    <property type="project" value="UniProtKB-SubCell"/>
</dbReference>
<dbReference type="GO" id="GO:0005524">
    <property type="term" value="F:ATP binding"/>
    <property type="evidence" value="ECO:0007669"/>
    <property type="project" value="UniProtKB-KW"/>
</dbReference>
<dbReference type="GO" id="GO:0000049">
    <property type="term" value="F:tRNA binding"/>
    <property type="evidence" value="ECO:0007669"/>
    <property type="project" value="UniProtKB-KW"/>
</dbReference>
<dbReference type="GO" id="GO:0103016">
    <property type="term" value="F:tRNA-uridine 2-sulfurtransferase activity"/>
    <property type="evidence" value="ECO:0007669"/>
    <property type="project" value="UniProtKB-EC"/>
</dbReference>
<dbReference type="GO" id="GO:0002143">
    <property type="term" value="P:tRNA wobble position uridine thiolation"/>
    <property type="evidence" value="ECO:0007669"/>
    <property type="project" value="TreeGrafter"/>
</dbReference>
<dbReference type="CDD" id="cd01998">
    <property type="entry name" value="MnmA_TRMU-like"/>
    <property type="match status" value="1"/>
</dbReference>
<dbReference type="FunFam" id="2.30.30.280:FF:000001">
    <property type="entry name" value="tRNA-specific 2-thiouridylase MnmA"/>
    <property type="match status" value="1"/>
</dbReference>
<dbReference type="FunFam" id="2.40.30.10:FF:000023">
    <property type="entry name" value="tRNA-specific 2-thiouridylase MnmA"/>
    <property type="match status" value="1"/>
</dbReference>
<dbReference type="FunFam" id="3.40.50.620:FF:000302">
    <property type="entry name" value="tRNA-specific 2-thiouridylase MnmA"/>
    <property type="match status" value="1"/>
</dbReference>
<dbReference type="Gene3D" id="2.30.30.280">
    <property type="entry name" value="Adenine nucleotide alpha hydrolases-like domains"/>
    <property type="match status" value="1"/>
</dbReference>
<dbReference type="Gene3D" id="3.40.50.620">
    <property type="entry name" value="HUPs"/>
    <property type="match status" value="1"/>
</dbReference>
<dbReference type="Gene3D" id="2.40.30.10">
    <property type="entry name" value="Translation factors"/>
    <property type="match status" value="1"/>
</dbReference>
<dbReference type="HAMAP" id="MF_00144">
    <property type="entry name" value="tRNA_thiouridyl_MnmA"/>
    <property type="match status" value="1"/>
</dbReference>
<dbReference type="InterPro" id="IPR004506">
    <property type="entry name" value="MnmA-like"/>
</dbReference>
<dbReference type="InterPro" id="IPR046885">
    <property type="entry name" value="MnmA-like_C"/>
</dbReference>
<dbReference type="InterPro" id="IPR046884">
    <property type="entry name" value="MnmA-like_central"/>
</dbReference>
<dbReference type="InterPro" id="IPR023382">
    <property type="entry name" value="MnmA-like_central_sf"/>
</dbReference>
<dbReference type="InterPro" id="IPR014729">
    <property type="entry name" value="Rossmann-like_a/b/a_fold"/>
</dbReference>
<dbReference type="NCBIfam" id="NF001138">
    <property type="entry name" value="PRK00143.1"/>
    <property type="match status" value="1"/>
</dbReference>
<dbReference type="NCBIfam" id="TIGR00420">
    <property type="entry name" value="trmU"/>
    <property type="match status" value="1"/>
</dbReference>
<dbReference type="PANTHER" id="PTHR11933:SF5">
    <property type="entry name" value="MITOCHONDRIAL TRNA-SPECIFIC 2-THIOURIDYLASE 1"/>
    <property type="match status" value="1"/>
</dbReference>
<dbReference type="PANTHER" id="PTHR11933">
    <property type="entry name" value="TRNA 5-METHYLAMINOMETHYL-2-THIOURIDYLATE -METHYLTRANSFERASE"/>
    <property type="match status" value="1"/>
</dbReference>
<dbReference type="Pfam" id="PF03054">
    <property type="entry name" value="tRNA_Me_trans"/>
    <property type="match status" value="1"/>
</dbReference>
<dbReference type="Pfam" id="PF20258">
    <property type="entry name" value="tRNA_Me_trans_C"/>
    <property type="match status" value="1"/>
</dbReference>
<dbReference type="Pfam" id="PF20259">
    <property type="entry name" value="tRNA_Me_trans_M"/>
    <property type="match status" value="1"/>
</dbReference>
<dbReference type="SUPFAM" id="SSF52402">
    <property type="entry name" value="Adenine nucleotide alpha hydrolases-like"/>
    <property type="match status" value="1"/>
</dbReference>
<gene>
    <name evidence="1" type="primary">mnmA</name>
    <name type="ordered locus">CYB_1191</name>
</gene>
<protein>
    <recommendedName>
        <fullName evidence="1">tRNA-specific 2-thiouridylase MnmA</fullName>
        <ecNumber evidence="1">2.8.1.13</ecNumber>
    </recommendedName>
</protein>
<comment type="function">
    <text evidence="1">Catalyzes the 2-thiolation of uridine at the wobble position (U34) of tRNA, leading to the formation of s(2)U34.</text>
</comment>
<comment type="catalytic activity">
    <reaction evidence="1">
        <text>S-sulfanyl-L-cysteinyl-[protein] + uridine(34) in tRNA + AH2 + ATP = 2-thiouridine(34) in tRNA + L-cysteinyl-[protein] + A + AMP + diphosphate + H(+)</text>
        <dbReference type="Rhea" id="RHEA:47032"/>
        <dbReference type="Rhea" id="RHEA-COMP:10131"/>
        <dbReference type="Rhea" id="RHEA-COMP:11726"/>
        <dbReference type="Rhea" id="RHEA-COMP:11727"/>
        <dbReference type="Rhea" id="RHEA-COMP:11728"/>
        <dbReference type="ChEBI" id="CHEBI:13193"/>
        <dbReference type="ChEBI" id="CHEBI:15378"/>
        <dbReference type="ChEBI" id="CHEBI:17499"/>
        <dbReference type="ChEBI" id="CHEBI:29950"/>
        <dbReference type="ChEBI" id="CHEBI:30616"/>
        <dbReference type="ChEBI" id="CHEBI:33019"/>
        <dbReference type="ChEBI" id="CHEBI:61963"/>
        <dbReference type="ChEBI" id="CHEBI:65315"/>
        <dbReference type="ChEBI" id="CHEBI:87170"/>
        <dbReference type="ChEBI" id="CHEBI:456215"/>
        <dbReference type="EC" id="2.8.1.13"/>
    </reaction>
</comment>
<comment type="subcellular location">
    <subcellularLocation>
        <location evidence="1">Cytoplasm</location>
    </subcellularLocation>
</comment>
<comment type="similarity">
    <text evidence="1">Belongs to the MnmA/TRMU family.</text>
</comment>
<keyword id="KW-0067">ATP-binding</keyword>
<keyword id="KW-0963">Cytoplasm</keyword>
<keyword id="KW-1015">Disulfide bond</keyword>
<keyword id="KW-0547">Nucleotide-binding</keyword>
<keyword id="KW-1185">Reference proteome</keyword>
<keyword id="KW-0694">RNA-binding</keyword>
<keyword id="KW-0808">Transferase</keyword>
<keyword id="KW-0819">tRNA processing</keyword>
<keyword id="KW-0820">tRNA-binding</keyword>